<proteinExistence type="inferred from homology"/>
<organism>
    <name type="scientific">Sorghum bicolor</name>
    <name type="common">Sorghum</name>
    <name type="synonym">Sorghum vulgare</name>
    <dbReference type="NCBI Taxonomy" id="4558"/>
    <lineage>
        <taxon>Eukaryota</taxon>
        <taxon>Viridiplantae</taxon>
        <taxon>Streptophyta</taxon>
        <taxon>Embryophyta</taxon>
        <taxon>Tracheophyta</taxon>
        <taxon>Spermatophyta</taxon>
        <taxon>Magnoliopsida</taxon>
        <taxon>Liliopsida</taxon>
        <taxon>Poales</taxon>
        <taxon>Poaceae</taxon>
        <taxon>PACMAD clade</taxon>
        <taxon>Panicoideae</taxon>
        <taxon>Andropogonodae</taxon>
        <taxon>Andropogoneae</taxon>
        <taxon>Sorghinae</taxon>
        <taxon>Sorghum</taxon>
    </lineage>
</organism>
<gene>
    <name evidence="1" type="primary">psbF</name>
</gene>
<geneLocation type="chloroplast"/>
<sequence>MTIDRTYPIFTVRWLAVHGLAVPTVFFLGSISAMQFIQR</sequence>
<accession>A1E9U0</accession>
<feature type="chain" id="PRO_0000275740" description="Cytochrome b559 subunit beta">
    <location>
        <begin position="1"/>
        <end position="39"/>
    </location>
</feature>
<feature type="transmembrane region" description="Helical" evidence="1">
    <location>
        <begin position="14"/>
        <end position="30"/>
    </location>
</feature>
<feature type="binding site" description="axial binding residue" evidence="1">
    <location>
        <position position="18"/>
    </location>
    <ligand>
        <name>heme</name>
        <dbReference type="ChEBI" id="CHEBI:30413"/>
        <note>ligand shared with alpha subunit</note>
    </ligand>
    <ligandPart>
        <name>Fe</name>
        <dbReference type="ChEBI" id="CHEBI:18248"/>
    </ligandPart>
</feature>
<protein>
    <recommendedName>
        <fullName evidence="1">Cytochrome b559 subunit beta</fullName>
    </recommendedName>
    <alternativeName>
        <fullName evidence="1">PSII reaction center subunit VI</fullName>
    </alternativeName>
</protein>
<comment type="function">
    <text evidence="1">This b-type cytochrome is tightly associated with the reaction center of photosystem II (PSII). PSII is a light-driven water:plastoquinone oxidoreductase that uses light energy to abstract electrons from H(2)O, generating O(2) and a proton gradient subsequently used for ATP formation. It consists of a core antenna complex that captures photons, and an electron transfer chain that converts photonic excitation into a charge separation.</text>
</comment>
<comment type="cofactor">
    <cofactor evidence="1">
        <name>heme b</name>
        <dbReference type="ChEBI" id="CHEBI:60344"/>
    </cofactor>
    <text evidence="1">With its partner (PsbE) binds heme. PSII binds additional chlorophylls, carotenoids and specific lipids.</text>
</comment>
<comment type="subunit">
    <text evidence="1">Heterodimer of an alpha subunit and a beta subunit. PSII is composed of 1 copy each of membrane proteins PsbA, PsbB, PsbC, PsbD, PsbE, PsbF, PsbH, PsbI, PsbJ, PsbK, PsbL, PsbM, PsbT, PsbX, PsbY, PsbZ, Psb30/Ycf12, at least 3 peripheral proteins of the oxygen-evolving complex and a large number of cofactors. It forms dimeric complexes.</text>
</comment>
<comment type="subcellular location">
    <subcellularLocation>
        <location evidence="1">Plastid</location>
        <location evidence="1">Chloroplast thylakoid membrane</location>
        <topology evidence="1">Single-pass membrane protein</topology>
    </subcellularLocation>
</comment>
<comment type="similarity">
    <text evidence="1">Belongs to the PsbE/PsbF family.</text>
</comment>
<dbReference type="EMBL" id="EF115542">
    <property type="protein sequence ID" value="ABK79512.1"/>
    <property type="molecule type" value="Genomic_DNA"/>
</dbReference>
<dbReference type="RefSeq" id="YP_899423.1">
    <property type="nucleotide sequence ID" value="NC_008602.1"/>
</dbReference>
<dbReference type="SMR" id="A1E9U0"/>
<dbReference type="FunCoup" id="A1E9U0">
    <property type="interactions" value="91"/>
</dbReference>
<dbReference type="STRING" id="4558.A1E9U0"/>
<dbReference type="GeneID" id="4549175"/>
<dbReference type="KEGG" id="sbi:4549175"/>
<dbReference type="InParanoid" id="A1E9U0"/>
<dbReference type="OrthoDB" id="77at2759"/>
<dbReference type="Proteomes" id="UP000000768">
    <property type="component" value="Chloroplast"/>
</dbReference>
<dbReference type="GO" id="GO:0009535">
    <property type="term" value="C:chloroplast thylakoid membrane"/>
    <property type="evidence" value="ECO:0007669"/>
    <property type="project" value="UniProtKB-SubCell"/>
</dbReference>
<dbReference type="GO" id="GO:0009539">
    <property type="term" value="C:photosystem II reaction center"/>
    <property type="evidence" value="ECO:0007669"/>
    <property type="project" value="InterPro"/>
</dbReference>
<dbReference type="GO" id="GO:0009055">
    <property type="term" value="F:electron transfer activity"/>
    <property type="evidence" value="ECO:0007669"/>
    <property type="project" value="UniProtKB-UniRule"/>
</dbReference>
<dbReference type="GO" id="GO:0020037">
    <property type="term" value="F:heme binding"/>
    <property type="evidence" value="ECO:0007669"/>
    <property type="project" value="InterPro"/>
</dbReference>
<dbReference type="GO" id="GO:0005506">
    <property type="term" value="F:iron ion binding"/>
    <property type="evidence" value="ECO:0007669"/>
    <property type="project" value="UniProtKB-UniRule"/>
</dbReference>
<dbReference type="GO" id="GO:0009767">
    <property type="term" value="P:photosynthetic electron transport chain"/>
    <property type="evidence" value="ECO:0007669"/>
    <property type="project" value="InterPro"/>
</dbReference>
<dbReference type="HAMAP" id="MF_00643">
    <property type="entry name" value="PSII_PsbF"/>
    <property type="match status" value="1"/>
</dbReference>
<dbReference type="InterPro" id="IPR006241">
    <property type="entry name" value="PSII_cyt_b559_bsu"/>
</dbReference>
<dbReference type="InterPro" id="IPR006216">
    <property type="entry name" value="PSII_cyt_b559_CS"/>
</dbReference>
<dbReference type="InterPro" id="IPR013081">
    <property type="entry name" value="PSII_cyt_b559_N"/>
</dbReference>
<dbReference type="NCBIfam" id="TIGR01333">
    <property type="entry name" value="cyt_b559_beta"/>
    <property type="match status" value="1"/>
</dbReference>
<dbReference type="Pfam" id="PF00283">
    <property type="entry name" value="Cytochrom_B559"/>
    <property type="match status" value="1"/>
</dbReference>
<dbReference type="PIRSF" id="PIRSF000037">
    <property type="entry name" value="PsbF"/>
    <property type="match status" value="1"/>
</dbReference>
<dbReference type="SUPFAM" id="SSF161045">
    <property type="entry name" value="Cytochrome b559 subunits"/>
    <property type="match status" value="1"/>
</dbReference>
<dbReference type="PROSITE" id="PS00537">
    <property type="entry name" value="CYTOCHROME_B559"/>
    <property type="match status" value="1"/>
</dbReference>
<name>PSBF_SORBI</name>
<reference key="1">
    <citation type="journal article" date="2007" name="Theor. Appl. Genet.">
        <title>Complete chloroplast genome sequences of Hordeum vulgare, Sorghum bicolor and Agrostis stolonifera, and comparative analyses with other grass genomes.</title>
        <authorList>
            <person name="Saski C."/>
            <person name="Lee S.-B."/>
            <person name="Fjellheim S."/>
            <person name="Guda C."/>
            <person name="Jansen R.K."/>
            <person name="Luo H."/>
            <person name="Tomkins J."/>
            <person name="Rognli O.A."/>
            <person name="Daniell H."/>
            <person name="Clarke J.L."/>
        </authorList>
    </citation>
    <scope>NUCLEOTIDE SEQUENCE [LARGE SCALE GENOMIC DNA]</scope>
    <source>
        <strain>cv. BTx623</strain>
    </source>
</reference>
<evidence type="ECO:0000255" key="1">
    <source>
        <dbReference type="HAMAP-Rule" id="MF_00643"/>
    </source>
</evidence>
<keyword id="KW-0150">Chloroplast</keyword>
<keyword id="KW-0249">Electron transport</keyword>
<keyword id="KW-0349">Heme</keyword>
<keyword id="KW-0408">Iron</keyword>
<keyword id="KW-0472">Membrane</keyword>
<keyword id="KW-0479">Metal-binding</keyword>
<keyword id="KW-0602">Photosynthesis</keyword>
<keyword id="KW-0604">Photosystem II</keyword>
<keyword id="KW-0934">Plastid</keyword>
<keyword id="KW-1185">Reference proteome</keyword>
<keyword id="KW-0793">Thylakoid</keyword>
<keyword id="KW-0812">Transmembrane</keyword>
<keyword id="KW-1133">Transmembrane helix</keyword>
<keyword id="KW-0813">Transport</keyword>